<accession>Q95916</accession>
<gene>
    <name type="primary">MT-ND4L</name>
    <name type="synonym">MTND4L</name>
    <name type="synonym">NADH4L</name>
    <name type="synonym">ND4L</name>
</gene>
<name>NU4LM_POLOR</name>
<protein>
    <recommendedName>
        <fullName>NADH-ubiquinone oxidoreductase chain 4L</fullName>
        <ecNumber>7.1.1.2</ecNumber>
    </recommendedName>
    <alternativeName>
        <fullName>NADH dehydrogenase subunit 4L</fullName>
    </alternativeName>
</protein>
<evidence type="ECO:0000250" key="1"/>
<evidence type="ECO:0000250" key="2">
    <source>
        <dbReference type="UniProtKB" id="P03901"/>
    </source>
</evidence>
<evidence type="ECO:0000255" key="3"/>
<evidence type="ECO:0000305" key="4"/>
<proteinExistence type="inferred from homology"/>
<feature type="chain" id="PRO_0000118476" description="NADH-ubiquinone oxidoreductase chain 4L">
    <location>
        <begin position="1"/>
        <end position="98"/>
    </location>
</feature>
<feature type="transmembrane region" description="Helical" evidence="3">
    <location>
        <begin position="1"/>
        <end position="21"/>
    </location>
</feature>
<feature type="transmembrane region" description="Helical" evidence="3">
    <location>
        <begin position="26"/>
        <end position="46"/>
    </location>
</feature>
<feature type="transmembrane region" description="Helical" evidence="3">
    <location>
        <begin position="59"/>
        <end position="79"/>
    </location>
</feature>
<dbReference type="EC" id="7.1.1.2"/>
<dbReference type="EMBL" id="U62532">
    <property type="protein sequence ID" value="AAC60313.1"/>
    <property type="molecule type" value="Genomic_DNA"/>
</dbReference>
<dbReference type="PIR" id="T11462">
    <property type="entry name" value="T11462"/>
</dbReference>
<dbReference type="RefSeq" id="NP_008324.1">
    <property type="nucleotide sequence ID" value="NC_001778.1"/>
</dbReference>
<dbReference type="SMR" id="Q95916"/>
<dbReference type="GeneID" id="808036"/>
<dbReference type="CTD" id="4539"/>
<dbReference type="GO" id="GO:0031966">
    <property type="term" value="C:mitochondrial membrane"/>
    <property type="evidence" value="ECO:0007669"/>
    <property type="project" value="UniProtKB-SubCell"/>
</dbReference>
<dbReference type="GO" id="GO:0045271">
    <property type="term" value="C:respiratory chain complex I"/>
    <property type="evidence" value="ECO:0000250"/>
    <property type="project" value="UniProtKB"/>
</dbReference>
<dbReference type="GO" id="GO:0008137">
    <property type="term" value="F:NADH dehydrogenase (ubiquinone) activity"/>
    <property type="evidence" value="ECO:0000250"/>
    <property type="project" value="UniProtKB"/>
</dbReference>
<dbReference type="GO" id="GO:0042773">
    <property type="term" value="P:ATP synthesis coupled electron transport"/>
    <property type="evidence" value="ECO:0007669"/>
    <property type="project" value="InterPro"/>
</dbReference>
<dbReference type="FunFam" id="1.10.287.3510:FF:000002">
    <property type="entry name" value="NADH-ubiquinone oxidoreductase chain 4L"/>
    <property type="match status" value="1"/>
</dbReference>
<dbReference type="Gene3D" id="1.10.287.3510">
    <property type="match status" value="1"/>
</dbReference>
<dbReference type="InterPro" id="IPR001133">
    <property type="entry name" value="NADH_UbQ_OxRdtase_chain4L/K"/>
</dbReference>
<dbReference type="InterPro" id="IPR039428">
    <property type="entry name" value="NUOK/Mnh_C1-like"/>
</dbReference>
<dbReference type="PANTHER" id="PTHR11434:SF0">
    <property type="entry name" value="NADH-UBIQUINONE OXIDOREDUCTASE CHAIN 4L"/>
    <property type="match status" value="1"/>
</dbReference>
<dbReference type="PANTHER" id="PTHR11434">
    <property type="entry name" value="NADH-UBIQUINONE OXIDOREDUCTASE SUBUNIT ND4L"/>
    <property type="match status" value="1"/>
</dbReference>
<dbReference type="Pfam" id="PF00420">
    <property type="entry name" value="Oxidored_q2"/>
    <property type="match status" value="1"/>
</dbReference>
<geneLocation type="mitochondrion"/>
<keyword id="KW-0249">Electron transport</keyword>
<keyword id="KW-0472">Membrane</keyword>
<keyword id="KW-0496">Mitochondrion</keyword>
<keyword id="KW-0520">NAD</keyword>
<keyword id="KW-0679">Respiratory chain</keyword>
<keyword id="KW-1278">Translocase</keyword>
<keyword id="KW-0812">Transmembrane</keyword>
<keyword id="KW-1133">Transmembrane helix</keyword>
<keyword id="KW-0813">Transport</keyword>
<keyword id="KW-0830">Ubiquinone</keyword>
<reference key="1">
    <citation type="journal article" date="1996" name="Genetics">
        <title>The complete mitochondrial DNA sequence of the bichir (Polypterus ornatipinnis), a basal ray-finned fish: ancient establishment of the consensus vertebrate gene order.</title>
        <authorList>
            <person name="Noack K."/>
            <person name="Zardoya R."/>
            <person name="Meyer A."/>
        </authorList>
    </citation>
    <scope>NUCLEOTIDE SEQUENCE [GENOMIC DNA]</scope>
</reference>
<comment type="function">
    <text evidence="2">Core subunit of the mitochondrial membrane respiratory chain NADH dehydrogenase (Complex I) which catalyzes electron transfer from NADH through the respiratory chain, using ubiquinone as an electron acceptor. Part of the enzyme membrane arm which is embedded in the lipid bilayer and involved in proton translocation.</text>
</comment>
<comment type="catalytic activity">
    <reaction evidence="2">
        <text>a ubiquinone + NADH + 5 H(+)(in) = a ubiquinol + NAD(+) + 4 H(+)(out)</text>
        <dbReference type="Rhea" id="RHEA:29091"/>
        <dbReference type="Rhea" id="RHEA-COMP:9565"/>
        <dbReference type="Rhea" id="RHEA-COMP:9566"/>
        <dbReference type="ChEBI" id="CHEBI:15378"/>
        <dbReference type="ChEBI" id="CHEBI:16389"/>
        <dbReference type="ChEBI" id="CHEBI:17976"/>
        <dbReference type="ChEBI" id="CHEBI:57540"/>
        <dbReference type="ChEBI" id="CHEBI:57945"/>
        <dbReference type="EC" id="7.1.1.2"/>
    </reaction>
    <physiologicalReaction direction="left-to-right" evidence="2">
        <dbReference type="Rhea" id="RHEA:29092"/>
    </physiologicalReaction>
</comment>
<comment type="subcellular location">
    <subcellularLocation>
        <location evidence="1">Mitochondrion membrane</location>
        <topology evidence="1">Multi-pass membrane protein</topology>
    </subcellularLocation>
</comment>
<comment type="similarity">
    <text evidence="4">Belongs to the complex I subunit 4L family.</text>
</comment>
<sequence length="98" mass="10609">MTHIMFTFSTAFMLGLSGLTFNRTHLLSALLCLEGMMLSLFIALAMWCTQNETMMFSSAPLLLLALSACEAGLGLSLLVATARAHGSDHLQNLNLLQC</sequence>
<organism>
    <name type="scientific">Polypterus ornatipinnis</name>
    <name type="common">Ornate bichir</name>
    <dbReference type="NCBI Taxonomy" id="49895"/>
    <lineage>
        <taxon>Eukaryota</taxon>
        <taxon>Metazoa</taxon>
        <taxon>Chordata</taxon>
        <taxon>Craniata</taxon>
        <taxon>Vertebrata</taxon>
        <taxon>Euteleostomi</taxon>
        <taxon>Actinopterygii</taxon>
        <taxon>Polypteriformes</taxon>
        <taxon>Polypteridae</taxon>
        <taxon>Polypterus</taxon>
    </lineage>
</organism>